<keyword id="KW-0687">Ribonucleoprotein</keyword>
<keyword id="KW-0689">Ribosomal protein</keyword>
<keyword id="KW-0694">RNA-binding</keyword>
<keyword id="KW-0699">rRNA-binding</keyword>
<feature type="chain" id="PRO_0000293769" description="Small ribosomal subunit protein uS3">
    <location>
        <begin position="1"/>
        <end position="233"/>
    </location>
</feature>
<feature type="domain" description="KH type-2" evidence="1">
    <location>
        <begin position="39"/>
        <end position="107"/>
    </location>
</feature>
<feature type="region of interest" description="Disordered" evidence="2">
    <location>
        <begin position="212"/>
        <end position="233"/>
    </location>
</feature>
<feature type="compositionally biased region" description="Basic and acidic residues" evidence="2">
    <location>
        <begin position="212"/>
        <end position="222"/>
    </location>
</feature>
<feature type="compositionally biased region" description="Basic residues" evidence="2">
    <location>
        <begin position="224"/>
        <end position="233"/>
    </location>
</feature>
<dbReference type="EMBL" id="CP000538">
    <property type="protein sequence ID" value="EAQ72760.1"/>
    <property type="molecule type" value="Genomic_DNA"/>
</dbReference>
<dbReference type="RefSeq" id="WP_002851138.1">
    <property type="nucleotide sequence ID" value="NC_008787.1"/>
</dbReference>
<dbReference type="SMR" id="A1W1V4"/>
<dbReference type="KEGG" id="cjj:CJJ81176_1698"/>
<dbReference type="eggNOG" id="COG0092">
    <property type="taxonomic scope" value="Bacteria"/>
</dbReference>
<dbReference type="HOGENOM" id="CLU_058591_0_2_7"/>
<dbReference type="Proteomes" id="UP000000646">
    <property type="component" value="Chromosome"/>
</dbReference>
<dbReference type="GO" id="GO:0022627">
    <property type="term" value="C:cytosolic small ribosomal subunit"/>
    <property type="evidence" value="ECO:0007669"/>
    <property type="project" value="TreeGrafter"/>
</dbReference>
<dbReference type="GO" id="GO:0003729">
    <property type="term" value="F:mRNA binding"/>
    <property type="evidence" value="ECO:0007669"/>
    <property type="project" value="UniProtKB-UniRule"/>
</dbReference>
<dbReference type="GO" id="GO:0019843">
    <property type="term" value="F:rRNA binding"/>
    <property type="evidence" value="ECO:0007669"/>
    <property type="project" value="UniProtKB-UniRule"/>
</dbReference>
<dbReference type="GO" id="GO:0003735">
    <property type="term" value="F:structural constituent of ribosome"/>
    <property type="evidence" value="ECO:0007669"/>
    <property type="project" value="InterPro"/>
</dbReference>
<dbReference type="GO" id="GO:0006412">
    <property type="term" value="P:translation"/>
    <property type="evidence" value="ECO:0007669"/>
    <property type="project" value="UniProtKB-UniRule"/>
</dbReference>
<dbReference type="CDD" id="cd02412">
    <property type="entry name" value="KH-II_30S_S3"/>
    <property type="match status" value="1"/>
</dbReference>
<dbReference type="FunFam" id="3.30.1140.32:FF:000006">
    <property type="entry name" value="30S ribosomal protein S3"/>
    <property type="match status" value="1"/>
</dbReference>
<dbReference type="FunFam" id="3.30.300.20:FF:000001">
    <property type="entry name" value="30S ribosomal protein S3"/>
    <property type="match status" value="1"/>
</dbReference>
<dbReference type="Gene3D" id="3.30.300.20">
    <property type="match status" value="1"/>
</dbReference>
<dbReference type="Gene3D" id="3.30.1140.32">
    <property type="entry name" value="Ribosomal protein S3, C-terminal domain"/>
    <property type="match status" value="1"/>
</dbReference>
<dbReference type="HAMAP" id="MF_01309_B">
    <property type="entry name" value="Ribosomal_uS3_B"/>
    <property type="match status" value="1"/>
</dbReference>
<dbReference type="InterPro" id="IPR004087">
    <property type="entry name" value="KH_dom"/>
</dbReference>
<dbReference type="InterPro" id="IPR015946">
    <property type="entry name" value="KH_dom-like_a/b"/>
</dbReference>
<dbReference type="InterPro" id="IPR004044">
    <property type="entry name" value="KH_dom_type_2"/>
</dbReference>
<dbReference type="InterPro" id="IPR009019">
    <property type="entry name" value="KH_sf_prok-type"/>
</dbReference>
<dbReference type="InterPro" id="IPR036419">
    <property type="entry name" value="Ribosomal_S3_C_sf"/>
</dbReference>
<dbReference type="InterPro" id="IPR005704">
    <property type="entry name" value="Ribosomal_uS3_bac-typ"/>
</dbReference>
<dbReference type="InterPro" id="IPR001351">
    <property type="entry name" value="Ribosomal_uS3_C"/>
</dbReference>
<dbReference type="InterPro" id="IPR018280">
    <property type="entry name" value="Ribosomal_uS3_CS"/>
</dbReference>
<dbReference type="NCBIfam" id="TIGR01009">
    <property type="entry name" value="rpsC_bact"/>
    <property type="match status" value="1"/>
</dbReference>
<dbReference type="PANTHER" id="PTHR11760">
    <property type="entry name" value="30S/40S RIBOSOMAL PROTEIN S3"/>
    <property type="match status" value="1"/>
</dbReference>
<dbReference type="PANTHER" id="PTHR11760:SF19">
    <property type="entry name" value="SMALL RIBOSOMAL SUBUNIT PROTEIN US3C"/>
    <property type="match status" value="1"/>
</dbReference>
<dbReference type="Pfam" id="PF07650">
    <property type="entry name" value="KH_2"/>
    <property type="match status" value="1"/>
</dbReference>
<dbReference type="Pfam" id="PF00189">
    <property type="entry name" value="Ribosomal_S3_C"/>
    <property type="match status" value="1"/>
</dbReference>
<dbReference type="SMART" id="SM00322">
    <property type="entry name" value="KH"/>
    <property type="match status" value="1"/>
</dbReference>
<dbReference type="SUPFAM" id="SSF54814">
    <property type="entry name" value="Prokaryotic type KH domain (KH-domain type II)"/>
    <property type="match status" value="1"/>
</dbReference>
<dbReference type="SUPFAM" id="SSF54821">
    <property type="entry name" value="Ribosomal protein S3 C-terminal domain"/>
    <property type="match status" value="1"/>
</dbReference>
<dbReference type="PROSITE" id="PS50823">
    <property type="entry name" value="KH_TYPE_2"/>
    <property type="match status" value="1"/>
</dbReference>
<dbReference type="PROSITE" id="PS00548">
    <property type="entry name" value="RIBOSOMAL_S3"/>
    <property type="match status" value="1"/>
</dbReference>
<proteinExistence type="inferred from homology"/>
<comment type="function">
    <text evidence="1">Binds the lower part of the 30S subunit head. Binds mRNA in the 70S ribosome, positioning it for translation.</text>
</comment>
<comment type="subunit">
    <text evidence="1">Part of the 30S ribosomal subunit. Forms a tight complex with proteins S10 and S14.</text>
</comment>
<comment type="similarity">
    <text evidence="1">Belongs to the universal ribosomal protein uS3 family.</text>
</comment>
<sequence>MGQKVNPIGLRLGINRNWESRWFPTKANLVENIGEDYKIRAFLKRKLYYAGISQILVERTAKKLRVTVVAARPGIIIGKKGSDVDNLRKELQDLIGKDVNINIKEERKAGASAQLAAESVATQLEKRIAFRRAMKKVIQGAQKAGAKGIKVSVSGRLGGAEMARTEWYLEGRVPLHTLRAKIDYGFAEARTTYGNIGVKVWIFKGEVLHKGMQPEKTEESAPAKKPRRTRRGK</sequence>
<evidence type="ECO:0000255" key="1">
    <source>
        <dbReference type="HAMAP-Rule" id="MF_01309"/>
    </source>
</evidence>
<evidence type="ECO:0000256" key="2">
    <source>
        <dbReference type="SAM" id="MobiDB-lite"/>
    </source>
</evidence>
<evidence type="ECO:0000305" key="3"/>
<gene>
    <name evidence="1" type="primary">rpsC</name>
    <name type="ordered locus">CJJ81176_1698</name>
</gene>
<reference key="1">
    <citation type="submission" date="2006-12" db="EMBL/GenBank/DDBJ databases">
        <authorList>
            <person name="Fouts D.E."/>
            <person name="Nelson K.E."/>
            <person name="Sebastian Y."/>
        </authorList>
    </citation>
    <scope>NUCLEOTIDE SEQUENCE [LARGE SCALE GENOMIC DNA]</scope>
    <source>
        <strain>81-176</strain>
    </source>
</reference>
<name>RS3_CAMJJ</name>
<protein>
    <recommendedName>
        <fullName evidence="1">Small ribosomal subunit protein uS3</fullName>
    </recommendedName>
    <alternativeName>
        <fullName evidence="3">30S ribosomal protein S3</fullName>
    </alternativeName>
</protein>
<accession>A1W1V4</accession>
<organism>
    <name type="scientific">Campylobacter jejuni subsp. jejuni serotype O:23/36 (strain 81-176)</name>
    <dbReference type="NCBI Taxonomy" id="354242"/>
    <lineage>
        <taxon>Bacteria</taxon>
        <taxon>Pseudomonadati</taxon>
        <taxon>Campylobacterota</taxon>
        <taxon>Epsilonproteobacteria</taxon>
        <taxon>Campylobacterales</taxon>
        <taxon>Campylobacteraceae</taxon>
        <taxon>Campylobacter</taxon>
    </lineage>
</organism>